<protein>
    <recommendedName>
        <fullName evidence="1">Arginine deiminase</fullName>
        <shortName evidence="1">ADI</shortName>
        <ecNumber evidence="1">3.5.3.6</ecNumber>
    </recommendedName>
    <alternativeName>
        <fullName evidence="1">Arginine dihydrolase</fullName>
        <shortName evidence="1">AD</shortName>
    </alternativeName>
</protein>
<proteinExistence type="inferred from homology"/>
<evidence type="ECO:0000255" key="1">
    <source>
        <dbReference type="HAMAP-Rule" id="MF_00242"/>
    </source>
</evidence>
<dbReference type="EC" id="3.5.3.6" evidence="1"/>
<dbReference type="EMBL" id="CP000010">
    <property type="protein sequence ID" value="AAU47428.1"/>
    <property type="molecule type" value="Genomic_DNA"/>
</dbReference>
<dbReference type="RefSeq" id="WP_004526983.1">
    <property type="nucleotide sequence ID" value="NC_006348.1"/>
</dbReference>
<dbReference type="RefSeq" id="YP_102830.1">
    <property type="nucleotide sequence ID" value="NC_006348.1"/>
</dbReference>
<dbReference type="SMR" id="Q62KD9"/>
<dbReference type="GeneID" id="93060265"/>
<dbReference type="KEGG" id="bma:BMA1145"/>
<dbReference type="PATRIC" id="fig|243160.12.peg.1177"/>
<dbReference type="eggNOG" id="COG2235">
    <property type="taxonomic scope" value="Bacteria"/>
</dbReference>
<dbReference type="HOGENOM" id="CLU_052662_0_0_4"/>
<dbReference type="UniPathway" id="UPA00254">
    <property type="reaction ID" value="UER00364"/>
</dbReference>
<dbReference type="Proteomes" id="UP000006693">
    <property type="component" value="Chromosome 1"/>
</dbReference>
<dbReference type="GO" id="GO:0005737">
    <property type="term" value="C:cytoplasm"/>
    <property type="evidence" value="ECO:0007669"/>
    <property type="project" value="UniProtKB-SubCell"/>
</dbReference>
<dbReference type="GO" id="GO:0016990">
    <property type="term" value="F:arginine deiminase activity"/>
    <property type="evidence" value="ECO:0007669"/>
    <property type="project" value="UniProtKB-UniRule"/>
</dbReference>
<dbReference type="GO" id="GO:0019547">
    <property type="term" value="P:arginine catabolic process to ornithine"/>
    <property type="evidence" value="ECO:0007669"/>
    <property type="project" value="UniProtKB-UniRule"/>
</dbReference>
<dbReference type="GO" id="GO:0019546">
    <property type="term" value="P:arginine deiminase pathway"/>
    <property type="evidence" value="ECO:0007669"/>
    <property type="project" value="TreeGrafter"/>
</dbReference>
<dbReference type="Gene3D" id="1.10.3930.10">
    <property type="entry name" value="Arginine deiminase"/>
    <property type="match status" value="1"/>
</dbReference>
<dbReference type="Gene3D" id="3.75.10.10">
    <property type="entry name" value="L-arginine/glycine Amidinotransferase, Chain A"/>
    <property type="match status" value="1"/>
</dbReference>
<dbReference type="HAMAP" id="MF_00242">
    <property type="entry name" value="Arg_deiminase"/>
    <property type="match status" value="1"/>
</dbReference>
<dbReference type="InterPro" id="IPR003876">
    <property type="entry name" value="Arg_deiminase"/>
</dbReference>
<dbReference type="NCBIfam" id="TIGR01078">
    <property type="entry name" value="arcA"/>
    <property type="match status" value="1"/>
</dbReference>
<dbReference type="NCBIfam" id="NF002381">
    <property type="entry name" value="PRK01388.1"/>
    <property type="match status" value="1"/>
</dbReference>
<dbReference type="PANTHER" id="PTHR47271">
    <property type="entry name" value="ARGININE DEIMINASE"/>
    <property type="match status" value="1"/>
</dbReference>
<dbReference type="PANTHER" id="PTHR47271:SF3">
    <property type="entry name" value="ARGININE DEIMINASE"/>
    <property type="match status" value="1"/>
</dbReference>
<dbReference type="Pfam" id="PF02274">
    <property type="entry name" value="ADI"/>
    <property type="match status" value="1"/>
</dbReference>
<dbReference type="PIRSF" id="PIRSF006356">
    <property type="entry name" value="Arg_deiminase"/>
    <property type="match status" value="1"/>
</dbReference>
<dbReference type="PRINTS" id="PR01466">
    <property type="entry name" value="ARGDEIMINASE"/>
</dbReference>
<dbReference type="SUPFAM" id="SSF55909">
    <property type="entry name" value="Pentein"/>
    <property type="match status" value="1"/>
</dbReference>
<gene>
    <name evidence="1" type="primary">arcA</name>
    <name type="ordered locus">BMA1145</name>
</gene>
<sequence>MSQAIPQVGVHSEVGKLRKVLVCSPGLAHQRLTPSNCDELLFDDVMWVNQAKRDHFDFVSKMRERGVEVLEMHNLLTETVQNPAALKWILDRKITPDNVGIGLVDEVRAWLEGLEPRALAEFLIGGVAASDIAGAERSKVLTLFRDYLGKSSFVLPPLPNMMFTRDTSCWIYGGVTLNPMHWPARRQETLLVAAVYKFHPAFTDAKFDVWYGDPDRDHGMATLEGGDVMPIGRGVVLVGMGERTSRQAVGQLAQALFAKGAAERVIVAGLPNSRASMHLDTVFSFCDRDLVTVFPEVVNRIVPFTLRPGGDARYGIDIEREDKPFVDVVAQALGLKSLRVVETGGNDFAAEREQWDDGNNMVCIEPGVVVGYDRNTYTNTLLRKAGVEVITIGSSELGRGRGGGHCMTCPVLRDPVDY</sequence>
<comment type="catalytic activity">
    <reaction evidence="1">
        <text>L-arginine + H2O = L-citrulline + NH4(+)</text>
        <dbReference type="Rhea" id="RHEA:19597"/>
        <dbReference type="ChEBI" id="CHEBI:15377"/>
        <dbReference type="ChEBI" id="CHEBI:28938"/>
        <dbReference type="ChEBI" id="CHEBI:32682"/>
        <dbReference type="ChEBI" id="CHEBI:57743"/>
        <dbReference type="EC" id="3.5.3.6"/>
    </reaction>
</comment>
<comment type="pathway">
    <text evidence="1">Amino-acid degradation; L-arginine degradation via ADI pathway; carbamoyl phosphate from L-arginine: step 1/2.</text>
</comment>
<comment type="subcellular location">
    <subcellularLocation>
        <location evidence="1">Cytoplasm</location>
    </subcellularLocation>
</comment>
<comment type="similarity">
    <text evidence="1">Belongs to the arginine deiminase family.</text>
</comment>
<reference key="1">
    <citation type="journal article" date="2004" name="Proc. Natl. Acad. Sci. U.S.A.">
        <title>Structural flexibility in the Burkholderia mallei genome.</title>
        <authorList>
            <person name="Nierman W.C."/>
            <person name="DeShazer D."/>
            <person name="Kim H.S."/>
            <person name="Tettelin H."/>
            <person name="Nelson K.E."/>
            <person name="Feldblyum T.V."/>
            <person name="Ulrich R.L."/>
            <person name="Ronning C.M."/>
            <person name="Brinkac L.M."/>
            <person name="Daugherty S.C."/>
            <person name="Davidsen T.D."/>
            <person name="DeBoy R.T."/>
            <person name="Dimitrov G."/>
            <person name="Dodson R.J."/>
            <person name="Durkin A.S."/>
            <person name="Gwinn M.L."/>
            <person name="Haft D.H."/>
            <person name="Khouri H.M."/>
            <person name="Kolonay J.F."/>
            <person name="Madupu R."/>
            <person name="Mohammoud Y."/>
            <person name="Nelson W.C."/>
            <person name="Radune D."/>
            <person name="Romero C.M."/>
            <person name="Sarria S."/>
            <person name="Selengut J."/>
            <person name="Shamblin C."/>
            <person name="Sullivan S.A."/>
            <person name="White O."/>
            <person name="Yu Y."/>
            <person name="Zafar N."/>
            <person name="Zhou L."/>
            <person name="Fraser C.M."/>
        </authorList>
    </citation>
    <scope>NUCLEOTIDE SEQUENCE [LARGE SCALE GENOMIC DNA]</scope>
    <source>
        <strain>ATCC 23344</strain>
    </source>
</reference>
<feature type="chain" id="PRO_0000182206" description="Arginine deiminase">
    <location>
        <begin position="1"/>
        <end position="418"/>
    </location>
</feature>
<feature type="active site" description="Amidino-cysteine intermediate" evidence="1">
    <location>
        <position position="406"/>
    </location>
</feature>
<keyword id="KW-0056">Arginine metabolism</keyword>
<keyword id="KW-0963">Cytoplasm</keyword>
<keyword id="KW-0378">Hydrolase</keyword>
<keyword id="KW-1185">Reference proteome</keyword>
<organism>
    <name type="scientific">Burkholderia mallei (strain ATCC 23344)</name>
    <dbReference type="NCBI Taxonomy" id="243160"/>
    <lineage>
        <taxon>Bacteria</taxon>
        <taxon>Pseudomonadati</taxon>
        <taxon>Pseudomonadota</taxon>
        <taxon>Betaproteobacteria</taxon>
        <taxon>Burkholderiales</taxon>
        <taxon>Burkholderiaceae</taxon>
        <taxon>Burkholderia</taxon>
        <taxon>pseudomallei group</taxon>
    </lineage>
</organism>
<name>ARCA_BURMA</name>
<accession>Q62KD9</accession>